<proteinExistence type="inferred from homology"/>
<gene>
    <name evidence="1" type="primary">glyA</name>
    <name type="ordered locus">TGAM_1322</name>
</gene>
<name>GLYA_THEGJ</name>
<protein>
    <recommendedName>
        <fullName evidence="1">Serine hydroxymethyltransferase</fullName>
        <shortName evidence="1">SHMT</shortName>
        <shortName evidence="1">Serine methylase</shortName>
        <ecNumber evidence="1">2.1.2.-</ecNumber>
    </recommendedName>
</protein>
<comment type="function">
    <text evidence="1">Catalyzes the reversible interconversion of serine and glycine with a modified folate serving as the one-carbon carrier. Also exhibits a pteridine-independent aldolase activity toward beta-hydroxyamino acids, producing glycine and aldehydes, via a retro-aldol mechanism.</text>
</comment>
<comment type="cofactor">
    <cofactor evidence="1">
        <name>pyridoxal 5'-phosphate</name>
        <dbReference type="ChEBI" id="CHEBI:597326"/>
    </cofactor>
</comment>
<comment type="pathway">
    <text evidence="1">Amino-acid biosynthesis; glycine biosynthesis; glycine from L-serine: step 1/1.</text>
</comment>
<comment type="subunit">
    <text evidence="1">Homodimer.</text>
</comment>
<comment type="subcellular location">
    <subcellularLocation>
        <location evidence="1">Cytoplasm</location>
    </subcellularLocation>
</comment>
<comment type="similarity">
    <text evidence="1">Belongs to the SHMT family.</text>
</comment>
<sequence length="427" mass="47790">MSYREYRDRVLNFIEDHEHWRAHTINLIASENVTSPSVTRAVASGFMHKYAEGWPRQRYYQGCKYVDEVELIGVELFTKLFGSDFADLRPISGTNANQAAFFGLTQPGDKAIVLHTSHGGHISHMPFGAAGMRGLEVHTWPFDNEAFNIDVDKAEKLIRELEPKIVVFGGSLFPFPHPVKELAPVAKEVGAYVMYDAAHVLGLIAGKQFQDPLREGADIITASTHKTFPGPQGGVILYKKFGETEEIAKLQWAIFPGVLSNHHLHHMAGKVITAAEMLEYGEKYAAQVVKNAKALAEALAEEGFKVIGEDKGYTESHQVIVDVSDLHPAAGGWAAPLLEEAGIILNKNLLPWDPLEKVNEPSGLRIGVQEMTRVGMFEDDMKEIAHFIRRVLIDKEDPKKVRRDVYGFRAEFQKVYYSFDHGLPLRE</sequence>
<organism>
    <name type="scientific">Thermococcus gammatolerans (strain DSM 15229 / JCM 11827 / EJ3)</name>
    <dbReference type="NCBI Taxonomy" id="593117"/>
    <lineage>
        <taxon>Archaea</taxon>
        <taxon>Methanobacteriati</taxon>
        <taxon>Methanobacteriota</taxon>
        <taxon>Thermococci</taxon>
        <taxon>Thermococcales</taxon>
        <taxon>Thermococcaceae</taxon>
        <taxon>Thermococcus</taxon>
    </lineage>
</organism>
<evidence type="ECO:0000255" key="1">
    <source>
        <dbReference type="HAMAP-Rule" id="MF_00051"/>
    </source>
</evidence>
<reference key="1">
    <citation type="journal article" date="2007" name="Genome Biol.">
        <title>Genome analysis and genome-wide proteomics of Thermococcus gammatolerans, the most radioresistant organism known amongst the Archaea.</title>
        <authorList>
            <person name="Zivanovic Y."/>
            <person name="Armengaud J."/>
            <person name="Lagorce A."/>
            <person name="Leplat C."/>
            <person name="Guerin P."/>
            <person name="Dutertre M."/>
            <person name="Anthouard V."/>
            <person name="Forterre P."/>
            <person name="Wincker P."/>
            <person name="Confalonieri F."/>
        </authorList>
    </citation>
    <scope>NUCLEOTIDE SEQUENCE [LARGE SCALE GENOMIC DNA]</scope>
    <source>
        <strain>DSM 15229 / JCM 11827 / EJ3</strain>
    </source>
</reference>
<dbReference type="EC" id="2.1.2.-" evidence="1"/>
<dbReference type="EMBL" id="CP001398">
    <property type="protein sequence ID" value="ACS33824.1"/>
    <property type="molecule type" value="Genomic_DNA"/>
</dbReference>
<dbReference type="RefSeq" id="WP_015858936.1">
    <property type="nucleotide sequence ID" value="NC_012804.1"/>
</dbReference>
<dbReference type="SMR" id="C5A6G2"/>
<dbReference type="STRING" id="593117.TGAM_1322"/>
<dbReference type="PaxDb" id="593117-TGAM_1322"/>
<dbReference type="GeneID" id="7988381"/>
<dbReference type="KEGG" id="tga:TGAM_1322"/>
<dbReference type="PATRIC" id="fig|593117.10.peg.1321"/>
<dbReference type="eggNOG" id="arCOG00070">
    <property type="taxonomic scope" value="Archaea"/>
</dbReference>
<dbReference type="HOGENOM" id="CLU_022477_2_1_2"/>
<dbReference type="OrthoDB" id="5821at2157"/>
<dbReference type="UniPathway" id="UPA00288">
    <property type="reaction ID" value="UER01023"/>
</dbReference>
<dbReference type="Proteomes" id="UP000001488">
    <property type="component" value="Chromosome"/>
</dbReference>
<dbReference type="GO" id="GO:0005737">
    <property type="term" value="C:cytoplasm"/>
    <property type="evidence" value="ECO:0007669"/>
    <property type="project" value="UniProtKB-SubCell"/>
</dbReference>
<dbReference type="GO" id="GO:0004372">
    <property type="term" value="F:glycine hydroxymethyltransferase activity"/>
    <property type="evidence" value="ECO:0007669"/>
    <property type="project" value="UniProtKB-UniRule"/>
</dbReference>
<dbReference type="GO" id="GO:0030170">
    <property type="term" value="F:pyridoxal phosphate binding"/>
    <property type="evidence" value="ECO:0007669"/>
    <property type="project" value="UniProtKB-UniRule"/>
</dbReference>
<dbReference type="GO" id="GO:0019264">
    <property type="term" value="P:glycine biosynthetic process from serine"/>
    <property type="evidence" value="ECO:0007669"/>
    <property type="project" value="UniProtKB-UniRule"/>
</dbReference>
<dbReference type="GO" id="GO:0035999">
    <property type="term" value="P:tetrahydrofolate interconversion"/>
    <property type="evidence" value="ECO:0007669"/>
    <property type="project" value="InterPro"/>
</dbReference>
<dbReference type="CDD" id="cd00378">
    <property type="entry name" value="SHMT"/>
    <property type="match status" value="1"/>
</dbReference>
<dbReference type="FunFam" id="3.40.640.10:FF:000101">
    <property type="entry name" value="Serine hydroxymethyltransferase"/>
    <property type="match status" value="1"/>
</dbReference>
<dbReference type="FunFam" id="3.90.1150.10:FF:000114">
    <property type="entry name" value="Serine hydroxymethyltransferase"/>
    <property type="match status" value="1"/>
</dbReference>
<dbReference type="Gene3D" id="3.90.1150.10">
    <property type="entry name" value="Aspartate Aminotransferase, domain 1"/>
    <property type="match status" value="1"/>
</dbReference>
<dbReference type="Gene3D" id="3.40.640.10">
    <property type="entry name" value="Type I PLP-dependent aspartate aminotransferase-like (Major domain)"/>
    <property type="match status" value="1"/>
</dbReference>
<dbReference type="HAMAP" id="MF_00051">
    <property type="entry name" value="SHMT"/>
    <property type="match status" value="1"/>
</dbReference>
<dbReference type="InterPro" id="IPR015424">
    <property type="entry name" value="PyrdxlP-dep_Trfase"/>
</dbReference>
<dbReference type="InterPro" id="IPR015421">
    <property type="entry name" value="PyrdxlP-dep_Trfase_major"/>
</dbReference>
<dbReference type="InterPro" id="IPR015422">
    <property type="entry name" value="PyrdxlP-dep_Trfase_small"/>
</dbReference>
<dbReference type="InterPro" id="IPR001085">
    <property type="entry name" value="Ser_HO-MeTrfase"/>
</dbReference>
<dbReference type="InterPro" id="IPR049943">
    <property type="entry name" value="Ser_HO-MeTrfase-like"/>
</dbReference>
<dbReference type="InterPro" id="IPR019798">
    <property type="entry name" value="Ser_HO-MeTrfase_PLP_BS"/>
</dbReference>
<dbReference type="InterPro" id="IPR039429">
    <property type="entry name" value="SHMT-like_dom"/>
</dbReference>
<dbReference type="NCBIfam" id="NF000586">
    <property type="entry name" value="PRK00011.1"/>
    <property type="match status" value="1"/>
</dbReference>
<dbReference type="PANTHER" id="PTHR11680">
    <property type="entry name" value="SERINE HYDROXYMETHYLTRANSFERASE"/>
    <property type="match status" value="1"/>
</dbReference>
<dbReference type="PANTHER" id="PTHR11680:SF35">
    <property type="entry name" value="SERINE HYDROXYMETHYLTRANSFERASE 1"/>
    <property type="match status" value="1"/>
</dbReference>
<dbReference type="Pfam" id="PF00464">
    <property type="entry name" value="SHMT"/>
    <property type="match status" value="1"/>
</dbReference>
<dbReference type="PIRSF" id="PIRSF000412">
    <property type="entry name" value="SHMT"/>
    <property type="match status" value="1"/>
</dbReference>
<dbReference type="SUPFAM" id="SSF53383">
    <property type="entry name" value="PLP-dependent transferases"/>
    <property type="match status" value="1"/>
</dbReference>
<dbReference type="PROSITE" id="PS00096">
    <property type="entry name" value="SHMT"/>
    <property type="match status" value="1"/>
</dbReference>
<accession>C5A6G2</accession>
<feature type="chain" id="PRO_1000202278" description="Serine hydroxymethyltransferase">
    <location>
        <begin position="1"/>
        <end position="427"/>
    </location>
</feature>
<feature type="binding site" evidence="1">
    <location>
        <begin position="120"/>
        <end position="122"/>
    </location>
    <ligand>
        <name>(6S)-5,6,7,8-tetrahydrofolate</name>
        <dbReference type="ChEBI" id="CHEBI:57453"/>
    </ligand>
</feature>
<feature type="binding site" evidence="1">
    <location>
        <position position="243"/>
    </location>
    <ligand>
        <name>(6S)-5,6,7,8-tetrahydrofolate</name>
        <dbReference type="ChEBI" id="CHEBI:57453"/>
    </ligand>
</feature>
<feature type="site" description="Plays an important role in substrate specificity" evidence="1">
    <location>
        <position position="225"/>
    </location>
</feature>
<feature type="modified residue" description="N6-(pyridoxal phosphate)lysine" evidence="1">
    <location>
        <position position="226"/>
    </location>
</feature>
<keyword id="KW-0028">Amino-acid biosynthesis</keyword>
<keyword id="KW-0963">Cytoplasm</keyword>
<keyword id="KW-0554">One-carbon metabolism</keyword>
<keyword id="KW-0663">Pyridoxal phosphate</keyword>
<keyword id="KW-1185">Reference proteome</keyword>
<keyword id="KW-0808">Transferase</keyword>